<proteinExistence type="inferred from homology"/>
<comment type="function">
    <text evidence="1">Inhibits all the catalytic activities of DNA gyrase by preventing its interaction with DNA. Acts by binding directly to the C-terminal domain of GyrB, which probably disrupts DNA binding by the gyrase.</text>
</comment>
<comment type="cofactor">
    <cofactor evidence="1">
        <name>Zn(2+)</name>
        <dbReference type="ChEBI" id="CHEBI:29105"/>
    </cofactor>
    <text evidence="1">Binds 1 zinc ion.</text>
</comment>
<comment type="subunit">
    <text evidence="1">Interacts with GyrB.</text>
</comment>
<comment type="similarity">
    <text evidence="1">Belongs to the DNA gyrase inhibitor YacG family.</text>
</comment>
<dbReference type="EMBL" id="BX936398">
    <property type="protein sequence ID" value="CAH19940.1"/>
    <property type="molecule type" value="Genomic_DNA"/>
</dbReference>
<dbReference type="RefSeq" id="WP_002209317.1">
    <property type="nucleotide sequence ID" value="NZ_CP009712.1"/>
</dbReference>
<dbReference type="SMR" id="Q66EJ3"/>
<dbReference type="GeneID" id="57975278"/>
<dbReference type="KEGG" id="ypo:BZ17_1855"/>
<dbReference type="KEGG" id="yps:YPTB0700"/>
<dbReference type="PATRIC" id="fig|273123.14.peg.1969"/>
<dbReference type="Proteomes" id="UP000001011">
    <property type="component" value="Chromosome"/>
</dbReference>
<dbReference type="GO" id="GO:0008657">
    <property type="term" value="F:DNA topoisomerase type II (double strand cut, ATP-hydrolyzing) inhibitor activity"/>
    <property type="evidence" value="ECO:0007669"/>
    <property type="project" value="UniProtKB-UniRule"/>
</dbReference>
<dbReference type="GO" id="GO:0008270">
    <property type="term" value="F:zinc ion binding"/>
    <property type="evidence" value="ECO:0007669"/>
    <property type="project" value="UniProtKB-UniRule"/>
</dbReference>
<dbReference type="GO" id="GO:0006355">
    <property type="term" value="P:regulation of DNA-templated transcription"/>
    <property type="evidence" value="ECO:0007669"/>
    <property type="project" value="InterPro"/>
</dbReference>
<dbReference type="Gene3D" id="3.30.50.10">
    <property type="entry name" value="Erythroid Transcription Factor GATA-1, subunit A"/>
    <property type="match status" value="1"/>
</dbReference>
<dbReference type="HAMAP" id="MF_00649">
    <property type="entry name" value="DNA_gyrase_inhibitor_YacG"/>
    <property type="match status" value="1"/>
</dbReference>
<dbReference type="InterPro" id="IPR005584">
    <property type="entry name" value="DNA_gyrase_inhibitor_YacG"/>
</dbReference>
<dbReference type="InterPro" id="IPR013088">
    <property type="entry name" value="Znf_NHR/GATA"/>
</dbReference>
<dbReference type="NCBIfam" id="NF001638">
    <property type="entry name" value="PRK00418.1"/>
    <property type="match status" value="1"/>
</dbReference>
<dbReference type="PANTHER" id="PTHR36150">
    <property type="entry name" value="DNA GYRASE INHIBITOR YACG"/>
    <property type="match status" value="1"/>
</dbReference>
<dbReference type="PANTHER" id="PTHR36150:SF1">
    <property type="entry name" value="DNA GYRASE INHIBITOR YACG"/>
    <property type="match status" value="1"/>
</dbReference>
<dbReference type="Pfam" id="PF03884">
    <property type="entry name" value="YacG"/>
    <property type="match status" value="1"/>
</dbReference>
<dbReference type="SUPFAM" id="SSF57716">
    <property type="entry name" value="Glucocorticoid receptor-like (DNA-binding domain)"/>
    <property type="match status" value="1"/>
</dbReference>
<accession>Q66EJ3</accession>
<keyword id="KW-0479">Metal-binding</keyword>
<keyword id="KW-0862">Zinc</keyword>
<gene>
    <name evidence="1" type="primary">yacG</name>
    <name type="ordered locus">YPTB0700</name>
</gene>
<evidence type="ECO:0000255" key="1">
    <source>
        <dbReference type="HAMAP-Rule" id="MF_00649"/>
    </source>
</evidence>
<evidence type="ECO:0000256" key="2">
    <source>
        <dbReference type="SAM" id="MobiDB-lite"/>
    </source>
</evidence>
<organism>
    <name type="scientific">Yersinia pseudotuberculosis serotype I (strain IP32953)</name>
    <dbReference type="NCBI Taxonomy" id="273123"/>
    <lineage>
        <taxon>Bacteria</taxon>
        <taxon>Pseudomonadati</taxon>
        <taxon>Pseudomonadota</taxon>
        <taxon>Gammaproteobacteria</taxon>
        <taxon>Enterobacterales</taxon>
        <taxon>Yersiniaceae</taxon>
        <taxon>Yersinia</taxon>
    </lineage>
</organism>
<reference key="1">
    <citation type="journal article" date="2004" name="Proc. Natl. Acad. Sci. U.S.A.">
        <title>Insights into the evolution of Yersinia pestis through whole-genome comparison with Yersinia pseudotuberculosis.</title>
        <authorList>
            <person name="Chain P.S.G."/>
            <person name="Carniel E."/>
            <person name="Larimer F.W."/>
            <person name="Lamerdin J."/>
            <person name="Stoutland P.O."/>
            <person name="Regala W.M."/>
            <person name="Georgescu A.M."/>
            <person name="Vergez L.M."/>
            <person name="Land M.L."/>
            <person name="Motin V.L."/>
            <person name="Brubaker R.R."/>
            <person name="Fowler J."/>
            <person name="Hinnebusch J."/>
            <person name="Marceau M."/>
            <person name="Medigue C."/>
            <person name="Simonet M."/>
            <person name="Chenal-Francisque V."/>
            <person name="Souza B."/>
            <person name="Dacheux D."/>
            <person name="Elliott J.M."/>
            <person name="Derbise A."/>
            <person name="Hauser L.J."/>
            <person name="Garcia E."/>
        </authorList>
    </citation>
    <scope>NUCLEOTIDE SEQUENCE [LARGE SCALE GENOMIC DNA]</scope>
    <source>
        <strain>IP32953</strain>
    </source>
</reference>
<name>YACG_YERPS</name>
<sequence>MESEQIQVNCPTCGKVVIWGEQSPFRPFCCKRCQLIDLGEWADEEKRIPSDTELSDSDEWSEEDPLKH</sequence>
<feature type="chain" id="PRO_0000211735" description="DNA gyrase inhibitor YacG">
    <location>
        <begin position="1"/>
        <end position="68"/>
    </location>
</feature>
<feature type="region of interest" description="Disordered" evidence="2">
    <location>
        <begin position="45"/>
        <end position="68"/>
    </location>
</feature>
<feature type="compositionally biased region" description="Acidic residues" evidence="2">
    <location>
        <begin position="53"/>
        <end position="68"/>
    </location>
</feature>
<feature type="binding site" evidence="1">
    <location>
        <position position="10"/>
    </location>
    <ligand>
        <name>Zn(2+)</name>
        <dbReference type="ChEBI" id="CHEBI:29105"/>
    </ligand>
</feature>
<feature type="binding site" evidence="1">
    <location>
        <position position="13"/>
    </location>
    <ligand>
        <name>Zn(2+)</name>
        <dbReference type="ChEBI" id="CHEBI:29105"/>
    </ligand>
</feature>
<feature type="binding site" evidence="1">
    <location>
        <position position="29"/>
    </location>
    <ligand>
        <name>Zn(2+)</name>
        <dbReference type="ChEBI" id="CHEBI:29105"/>
    </ligand>
</feature>
<feature type="binding site" evidence="1">
    <location>
        <position position="33"/>
    </location>
    <ligand>
        <name>Zn(2+)</name>
        <dbReference type="ChEBI" id="CHEBI:29105"/>
    </ligand>
</feature>
<protein>
    <recommendedName>
        <fullName evidence="1">DNA gyrase inhibitor YacG</fullName>
    </recommendedName>
</protein>